<protein>
    <recommendedName>
        <fullName>Bifunctional protein ThiO/ThiG</fullName>
    </recommendedName>
    <domain>
        <recommendedName>
            <fullName>Probable FAD-dependent glycine oxidase</fullName>
            <ecNumber>1.4.3.19</ecNumber>
        </recommendedName>
    </domain>
    <domain>
        <recommendedName>
            <fullName>Thiazole synthase</fullName>
            <ecNumber>2.8.1.10</ecNumber>
        </recommendedName>
    </domain>
</protein>
<evidence type="ECO:0000250" key="1"/>
<evidence type="ECO:0000305" key="2"/>
<name>THIOG_TRIV2</name>
<keyword id="KW-0963">Cytoplasm</keyword>
<keyword id="KW-0274">FAD</keyword>
<keyword id="KW-0285">Flavoprotein</keyword>
<keyword id="KW-0511">Multifunctional enzyme</keyword>
<keyword id="KW-0560">Oxidoreductase</keyword>
<keyword id="KW-0704">Schiff base</keyword>
<keyword id="KW-0784">Thiamine biosynthesis</keyword>
<keyword id="KW-0808">Transferase</keyword>
<accession>Q3M859</accession>
<sequence>MTRDIVIIGGGVIGLAIAVELKLRGTKVTVLCRDFPAAAAHAAAGMLAPDAEEITDEAMKSLCWRSRSLYPEWTSKLEDLTGLNTGYWPCGILAPVYEGQESKGVRIQENKGESPAYWLEKAVIHQYQPGLGEDVVGGWWYPEDAQVNNQALARVLWAAAESLGVELNDGITVEGLLQQQGQVVGVQTNTGIIQAEHYVLATGAWANELLPLPVTPRKGQMLRVRVPESVPELPLKRVLFGENIYIVPRRDRSIIIGATSEDVGFTPHNTPAGIQTLLQGAIRLYPQLQDYPIQEFWWGFRPATPDELPILGTSHCANLTLATGHYRNGILLAPITAALIADFIVEQKSDPLLSHFHYSRFQKQASTTPMFTHSANFSNGHAKNPPLPTLDSSLIIAGKSFHSRLMTGTGKYRSIEEMQQSVVASGCEIVTVAVRRVQTKAPGHEGLAEALDWSRIWMLPNTAGCQTAEEAIRVARLGREMAKLLGQEDNNFVKLEVIPDPKYLLPDPIGTLQAAEQLVKEGFAVLPYINADPMLAKRLEDVGCATVMPLASPIGSGQGLKTTANIQIIIENAKIPVVVDAGIGAPSEASQAMELGADALLINSAIALAQNPAAMAQAMNLATVAGRLAYLAGRMPIKTYASASSPVTGTIS</sequence>
<comment type="function">
    <text evidence="1">Catalyzes the FAD-dependent oxidative deamination of glycine. Is essential for thiamine biosynthesis since the oxidation of glycine catalyzed by ThiO generates the glycine imine intermediate (dehydroglycine) required for the biosynthesis of the thiazole ring of thiamine pyrophosphate.</text>
</comment>
<comment type="function">
    <text evidence="1">Catalyzes the rearrangement of 1-deoxy-D-xylulose 5-phosphate (DXP) to produce the thiazole phosphate moiety of thiamine. Sulfur is provided by the thiocarboxylate moiety of the carrier protein ThiS. In vitro, sulfur can be provided by H(2)S.</text>
</comment>
<comment type="catalytic activity">
    <reaction>
        <text>glycine + O2 + H2O = glyoxylate + H2O2 + NH4(+)</text>
        <dbReference type="Rhea" id="RHEA:11532"/>
        <dbReference type="ChEBI" id="CHEBI:15377"/>
        <dbReference type="ChEBI" id="CHEBI:15379"/>
        <dbReference type="ChEBI" id="CHEBI:16240"/>
        <dbReference type="ChEBI" id="CHEBI:28938"/>
        <dbReference type="ChEBI" id="CHEBI:36655"/>
        <dbReference type="ChEBI" id="CHEBI:57305"/>
        <dbReference type="EC" id="1.4.3.19"/>
    </reaction>
</comment>
<comment type="catalytic activity">
    <reaction>
        <text>[ThiS sulfur-carrier protein]-C-terminal-Gly-aminoethanethioate + 2-iminoacetate + 1-deoxy-D-xylulose 5-phosphate = [ThiS sulfur-carrier protein]-C-terminal Gly-Gly + 2-[(2R,5Z)-2-carboxy-4-methylthiazol-5(2H)-ylidene]ethyl phosphate + 2 H2O + H(+)</text>
        <dbReference type="Rhea" id="RHEA:26297"/>
        <dbReference type="Rhea" id="RHEA-COMP:12909"/>
        <dbReference type="Rhea" id="RHEA-COMP:19908"/>
        <dbReference type="ChEBI" id="CHEBI:15377"/>
        <dbReference type="ChEBI" id="CHEBI:15378"/>
        <dbReference type="ChEBI" id="CHEBI:57792"/>
        <dbReference type="ChEBI" id="CHEBI:62899"/>
        <dbReference type="ChEBI" id="CHEBI:77846"/>
        <dbReference type="ChEBI" id="CHEBI:90778"/>
        <dbReference type="ChEBI" id="CHEBI:232372"/>
        <dbReference type="EC" id="2.8.1.10"/>
    </reaction>
</comment>
<comment type="cofactor">
    <cofactor evidence="1">
        <name>FAD</name>
        <dbReference type="ChEBI" id="CHEBI:57692"/>
    </cofactor>
</comment>
<comment type="pathway">
    <text>Cofactor biosynthesis; thiamine diphosphate biosynthesis.</text>
</comment>
<comment type="subunit">
    <text evidence="1">Interacts with ThiH and ThiS.</text>
</comment>
<comment type="subcellular location">
    <subcellularLocation>
        <location evidence="1">Cytoplasm</location>
    </subcellularLocation>
</comment>
<comment type="similarity">
    <text evidence="2">In the N-terminal section; belongs to the DAO family. ThiO subfamily.</text>
</comment>
<comment type="similarity">
    <text evidence="2">In the C-terminal section; belongs to the ThiG family.</text>
</comment>
<organism>
    <name type="scientific">Trichormus variabilis (strain ATCC 29413 / PCC 7937)</name>
    <name type="common">Anabaena variabilis</name>
    <dbReference type="NCBI Taxonomy" id="240292"/>
    <lineage>
        <taxon>Bacteria</taxon>
        <taxon>Bacillati</taxon>
        <taxon>Cyanobacteriota</taxon>
        <taxon>Cyanophyceae</taxon>
        <taxon>Nostocales</taxon>
        <taxon>Nostocaceae</taxon>
        <taxon>Trichormus</taxon>
    </lineage>
</organism>
<feature type="chain" id="PRO_0000236329" description="Bifunctional protein ThiO/ThiG">
    <location>
        <begin position="1"/>
        <end position="652"/>
    </location>
</feature>
<feature type="region of interest" description="ThiO">
    <location>
        <begin position="1"/>
        <end position="366"/>
    </location>
</feature>
<feature type="region of interest" description="ThiG">
    <location>
        <begin position="393"/>
        <end position="652"/>
    </location>
</feature>
<feature type="active site" description="Schiff-base intermediate with DXP" evidence="1">
    <location>
        <position position="494"/>
    </location>
</feature>
<feature type="binding site" evidence="1">
    <location>
        <begin position="5"/>
        <end position="19"/>
    </location>
    <ligand>
        <name>FAD</name>
        <dbReference type="ChEBI" id="CHEBI:57692"/>
    </ligand>
</feature>
<feature type="binding site" evidence="1">
    <location>
        <begin position="44"/>
        <end position="46"/>
    </location>
    <ligand>
        <name>FAD</name>
        <dbReference type="ChEBI" id="CHEBI:57692"/>
    </ligand>
</feature>
<feature type="binding site" evidence="1">
    <location>
        <position position="52"/>
    </location>
    <ligand>
        <name>glycine</name>
        <dbReference type="ChEBI" id="CHEBI:57305"/>
    </ligand>
</feature>
<feature type="binding site" evidence="1">
    <location>
        <position position="173"/>
    </location>
    <ligand>
        <name>FAD</name>
        <dbReference type="ChEBI" id="CHEBI:57692"/>
    </ligand>
</feature>
<feature type="binding site" evidence="1">
    <location>
        <position position="301"/>
    </location>
    <ligand>
        <name>glycine</name>
        <dbReference type="ChEBI" id="CHEBI:57305"/>
    </ligand>
</feature>
<feature type="binding site" evidence="1">
    <location>
        <begin position="325"/>
        <end position="331"/>
    </location>
    <ligand>
        <name>FAD</name>
        <dbReference type="ChEBI" id="CHEBI:57692"/>
    </ligand>
</feature>
<feature type="binding site" evidence="1">
    <location>
        <position position="327"/>
    </location>
    <ligand>
        <name>glycine</name>
        <dbReference type="ChEBI" id="CHEBI:57305"/>
    </ligand>
</feature>
<feature type="binding site" evidence="1">
    <location>
        <position position="555"/>
    </location>
    <ligand>
        <name>1-deoxy-D-xylulose 5-phosphate</name>
        <dbReference type="ChEBI" id="CHEBI:57792"/>
    </ligand>
</feature>
<feature type="binding site" evidence="1">
    <location>
        <begin position="581"/>
        <end position="582"/>
    </location>
    <ligand>
        <name>1-deoxy-D-xylulose 5-phosphate</name>
        <dbReference type="ChEBI" id="CHEBI:57792"/>
    </ligand>
</feature>
<feature type="binding site" evidence="1">
    <location>
        <begin position="603"/>
        <end position="604"/>
    </location>
    <ligand>
        <name>1-deoxy-D-xylulose 5-phosphate</name>
        <dbReference type="ChEBI" id="CHEBI:57792"/>
    </ligand>
</feature>
<reference key="1">
    <citation type="journal article" date="2014" name="Stand. Genomic Sci.">
        <title>Complete genome sequence of Anabaena variabilis ATCC 29413.</title>
        <authorList>
            <person name="Thiel T."/>
            <person name="Pratte B.S."/>
            <person name="Zhong J."/>
            <person name="Goodwin L."/>
            <person name="Copeland A."/>
            <person name="Lucas S."/>
            <person name="Han C."/>
            <person name="Pitluck S."/>
            <person name="Land M.L."/>
            <person name="Kyrpides N.C."/>
            <person name="Woyke T."/>
        </authorList>
    </citation>
    <scope>NUCLEOTIDE SEQUENCE [LARGE SCALE GENOMIC DNA]</scope>
    <source>
        <strain>ATCC 29413 / PCC 7937</strain>
    </source>
</reference>
<proteinExistence type="inferred from homology"/>
<gene>
    <name type="primary">thiO/thiG</name>
    <name type="ordered locus">Ava_3219</name>
</gene>
<dbReference type="EC" id="1.4.3.19"/>
<dbReference type="EC" id="2.8.1.10"/>
<dbReference type="EMBL" id="CP000117">
    <property type="protein sequence ID" value="ABA22827.1"/>
    <property type="molecule type" value="Genomic_DNA"/>
</dbReference>
<dbReference type="SMR" id="Q3M859"/>
<dbReference type="STRING" id="240292.Ava_3219"/>
<dbReference type="KEGG" id="ava:Ava_3219"/>
<dbReference type="eggNOG" id="COG0665">
    <property type="taxonomic scope" value="Bacteria"/>
</dbReference>
<dbReference type="eggNOG" id="COG2022">
    <property type="taxonomic scope" value="Bacteria"/>
</dbReference>
<dbReference type="HOGENOM" id="CLU_024913_0_0_3"/>
<dbReference type="UniPathway" id="UPA00060"/>
<dbReference type="Proteomes" id="UP000002533">
    <property type="component" value="Chromosome"/>
</dbReference>
<dbReference type="GO" id="GO:0005737">
    <property type="term" value="C:cytoplasm"/>
    <property type="evidence" value="ECO:0007669"/>
    <property type="project" value="UniProtKB-SubCell"/>
</dbReference>
<dbReference type="GO" id="GO:0050660">
    <property type="term" value="F:flavin adenine dinucleotide binding"/>
    <property type="evidence" value="ECO:0007669"/>
    <property type="project" value="InterPro"/>
</dbReference>
<dbReference type="GO" id="GO:0043799">
    <property type="term" value="F:glycine oxidase activity"/>
    <property type="evidence" value="ECO:0007669"/>
    <property type="project" value="UniProtKB-EC"/>
</dbReference>
<dbReference type="GO" id="GO:1990107">
    <property type="term" value="F:thiazole synthase activity"/>
    <property type="evidence" value="ECO:0007669"/>
    <property type="project" value="UniProtKB-EC"/>
</dbReference>
<dbReference type="GO" id="GO:0009229">
    <property type="term" value="P:thiamine diphosphate biosynthetic process"/>
    <property type="evidence" value="ECO:0007669"/>
    <property type="project" value="UniProtKB-UniRule"/>
</dbReference>
<dbReference type="CDD" id="cd04728">
    <property type="entry name" value="ThiG"/>
    <property type="match status" value="1"/>
</dbReference>
<dbReference type="Gene3D" id="3.20.20.70">
    <property type="entry name" value="Aldolase class I"/>
    <property type="match status" value="1"/>
</dbReference>
<dbReference type="Gene3D" id="3.30.9.10">
    <property type="entry name" value="D-Amino Acid Oxidase, subunit A, domain 2"/>
    <property type="match status" value="1"/>
</dbReference>
<dbReference type="Gene3D" id="3.50.50.60">
    <property type="entry name" value="FAD/NAD(P)-binding domain"/>
    <property type="match status" value="1"/>
</dbReference>
<dbReference type="HAMAP" id="MF_00443">
    <property type="entry name" value="ThiG"/>
    <property type="match status" value="1"/>
</dbReference>
<dbReference type="InterPro" id="IPR013785">
    <property type="entry name" value="Aldolase_TIM"/>
</dbReference>
<dbReference type="InterPro" id="IPR006076">
    <property type="entry name" value="FAD-dep_OxRdtase"/>
</dbReference>
<dbReference type="InterPro" id="IPR036188">
    <property type="entry name" value="FAD/NAD-bd_sf"/>
</dbReference>
<dbReference type="InterPro" id="IPR012727">
    <property type="entry name" value="Gly_oxidase_ThiO"/>
</dbReference>
<dbReference type="InterPro" id="IPR033983">
    <property type="entry name" value="Thiazole_synthase_ThiG"/>
</dbReference>
<dbReference type="InterPro" id="IPR008867">
    <property type="entry name" value="ThiG"/>
</dbReference>
<dbReference type="NCBIfam" id="TIGR02352">
    <property type="entry name" value="thiamin_ThiO"/>
    <property type="match status" value="1"/>
</dbReference>
<dbReference type="PANTHER" id="PTHR34266">
    <property type="entry name" value="THIAZOLE SYNTHASE"/>
    <property type="match status" value="1"/>
</dbReference>
<dbReference type="PANTHER" id="PTHR34266:SF2">
    <property type="entry name" value="THIAZOLE SYNTHASE"/>
    <property type="match status" value="1"/>
</dbReference>
<dbReference type="Pfam" id="PF01266">
    <property type="entry name" value="DAO"/>
    <property type="match status" value="1"/>
</dbReference>
<dbReference type="Pfam" id="PF05690">
    <property type="entry name" value="ThiG"/>
    <property type="match status" value="1"/>
</dbReference>
<dbReference type="SUPFAM" id="SSF54373">
    <property type="entry name" value="FAD-linked reductases, C-terminal domain"/>
    <property type="match status" value="1"/>
</dbReference>
<dbReference type="SUPFAM" id="SSF51905">
    <property type="entry name" value="FAD/NAD(P)-binding domain"/>
    <property type="match status" value="1"/>
</dbReference>
<dbReference type="SUPFAM" id="SSF110399">
    <property type="entry name" value="ThiG-like"/>
    <property type="match status" value="1"/>
</dbReference>